<accession>Q58539</accession>
<gene>
    <name evidence="1" type="primary">rnp3</name>
    <name type="ordered locus">MJ1139</name>
</gene>
<keyword id="KW-0002">3D-structure</keyword>
<keyword id="KW-0963">Cytoplasm</keyword>
<keyword id="KW-0255">Endonuclease</keyword>
<keyword id="KW-0378">Hydrolase</keyword>
<keyword id="KW-0540">Nuclease</keyword>
<keyword id="KW-1185">Reference proteome</keyword>
<keyword id="KW-0819">tRNA processing</keyword>
<comment type="function">
    <text evidence="1 2 3 4">Part of ribonuclease P, a protein complex that generates mature tRNA molecules by cleaving their 5'-ends.</text>
</comment>
<comment type="catalytic activity">
    <reaction evidence="1">
        <text>Endonucleolytic cleavage of RNA, removing 5'-extranucleotides from tRNA precursor.</text>
        <dbReference type="EC" id="3.1.26.5"/>
    </reaction>
</comment>
<comment type="subunit">
    <text evidence="1 2 3 4">Consists of a catalytic RNA component and at least 4-5 protein subunits. Forms a subcomplex with Rnp2 which stimulates the catalytic RNA.</text>
</comment>
<comment type="subcellular location">
    <subcellularLocation>
        <location evidence="1">Cytoplasm</location>
    </subcellularLocation>
</comment>
<comment type="similarity">
    <text evidence="1">Belongs to the eukaryotic/archaeal RNase P protein component 3 family.</text>
</comment>
<feature type="chain" id="PRO_0000140039" description="Ribonuclease P protein component 3">
    <location>
        <begin position="1"/>
        <end position="232"/>
    </location>
</feature>
<evidence type="ECO:0000255" key="1">
    <source>
        <dbReference type="HAMAP-Rule" id="MF_00756"/>
    </source>
</evidence>
<evidence type="ECO:0000269" key="2">
    <source>
    </source>
</evidence>
<evidence type="ECO:0000269" key="3">
    <source>
    </source>
</evidence>
<evidence type="ECO:0000269" key="4">
    <source>
    </source>
</evidence>
<sequence length="232" mass="27346">MRIDINRIEKEEDIKLLKELKWNGFVFYQYDDEFSKDRYEEVKAIAESYKLKVYSGVKIKTESSKQLRDKVKKFRNKCHIILIEGGVLKINRAAVELHDVDILSTPELGRKDSGIDHVLARLASNHRVAIELNFKTLLNKDGYERARTLLFFRNNLKLAKKFDVPVVISTDAENKYQIKNPYDLRAFLNTLVEPLYAKKIMETAYKICDFRDYLMRDNVVRYGVEIIKEEKE</sequence>
<proteinExistence type="evidence at protein level"/>
<dbReference type="EC" id="3.1.26.5" evidence="1"/>
<dbReference type="EMBL" id="L77117">
    <property type="protein sequence ID" value="AAB99146.1"/>
    <property type="molecule type" value="Genomic_DNA"/>
</dbReference>
<dbReference type="PIR" id="B64442">
    <property type="entry name" value="B64442"/>
</dbReference>
<dbReference type="RefSeq" id="WP_010870650.1">
    <property type="nucleotide sequence ID" value="NC_000909.1"/>
</dbReference>
<dbReference type="PDB" id="6K0A">
    <property type="method" value="EM"/>
    <property type="resolution" value="4.60 A"/>
    <property type="chains" value="C/D=1-232"/>
</dbReference>
<dbReference type="PDB" id="6K0B">
    <property type="method" value="EM"/>
    <property type="resolution" value="4.30 A"/>
    <property type="chains" value="C/D=1-232"/>
</dbReference>
<dbReference type="PDBsum" id="6K0A"/>
<dbReference type="PDBsum" id="6K0B"/>
<dbReference type="EMDB" id="EMD-9900"/>
<dbReference type="SMR" id="Q58539"/>
<dbReference type="STRING" id="243232.MJ_1139"/>
<dbReference type="PaxDb" id="243232-MJ_1139"/>
<dbReference type="EnsemblBacteria" id="AAB99146">
    <property type="protein sequence ID" value="AAB99146"/>
    <property type="gene ID" value="MJ_1139"/>
</dbReference>
<dbReference type="GeneID" id="1452035"/>
<dbReference type="KEGG" id="mja:MJ_1139"/>
<dbReference type="eggNOG" id="arCOG00307">
    <property type="taxonomic scope" value="Archaea"/>
</dbReference>
<dbReference type="HOGENOM" id="CLU_074509_0_0_2"/>
<dbReference type="InParanoid" id="Q58539"/>
<dbReference type="OrthoDB" id="85765at2157"/>
<dbReference type="PhylomeDB" id="Q58539"/>
<dbReference type="Proteomes" id="UP000000805">
    <property type="component" value="Chromosome"/>
</dbReference>
<dbReference type="GO" id="GO:0005737">
    <property type="term" value="C:cytoplasm"/>
    <property type="evidence" value="ECO:0007669"/>
    <property type="project" value="UniProtKB-SubCell"/>
</dbReference>
<dbReference type="GO" id="GO:0030677">
    <property type="term" value="C:ribonuclease P complex"/>
    <property type="evidence" value="ECO:0007669"/>
    <property type="project" value="UniProtKB-UniRule"/>
</dbReference>
<dbReference type="GO" id="GO:0004526">
    <property type="term" value="F:ribonuclease P activity"/>
    <property type="evidence" value="ECO:0007669"/>
    <property type="project" value="UniProtKB-UniRule"/>
</dbReference>
<dbReference type="GO" id="GO:0001682">
    <property type="term" value="P:tRNA 5'-leader removal"/>
    <property type="evidence" value="ECO:0007669"/>
    <property type="project" value="UniProtKB-UniRule"/>
</dbReference>
<dbReference type="Gene3D" id="3.20.20.140">
    <property type="entry name" value="Metal-dependent hydrolases"/>
    <property type="match status" value="1"/>
</dbReference>
<dbReference type="HAMAP" id="MF_00756">
    <property type="entry name" value="RNase_P_3"/>
    <property type="match status" value="1"/>
</dbReference>
<dbReference type="InterPro" id="IPR016195">
    <property type="entry name" value="Pol/histidinol_Pase-like"/>
</dbReference>
<dbReference type="InterPro" id="IPR023539">
    <property type="entry name" value="RNase_P_comp-3_arc"/>
</dbReference>
<dbReference type="InterPro" id="IPR002738">
    <property type="entry name" value="RNase_P_p30"/>
</dbReference>
<dbReference type="NCBIfam" id="NF046108">
    <property type="entry name" value="RNaseP3Mthcoc"/>
    <property type="match status" value="1"/>
</dbReference>
<dbReference type="Pfam" id="PF01876">
    <property type="entry name" value="RNase_P_p30"/>
    <property type="match status" value="1"/>
</dbReference>
<dbReference type="SUPFAM" id="SSF89550">
    <property type="entry name" value="PHP domain-like"/>
    <property type="match status" value="1"/>
</dbReference>
<reference key="1">
    <citation type="journal article" date="1996" name="Science">
        <title>Complete genome sequence of the methanogenic archaeon, Methanococcus jannaschii.</title>
        <authorList>
            <person name="Bult C.J."/>
            <person name="White O."/>
            <person name="Olsen G.J."/>
            <person name="Zhou L."/>
            <person name="Fleischmann R.D."/>
            <person name="Sutton G.G."/>
            <person name="Blake J.A."/>
            <person name="FitzGerald L.M."/>
            <person name="Clayton R.A."/>
            <person name="Gocayne J.D."/>
            <person name="Kerlavage A.R."/>
            <person name="Dougherty B.A."/>
            <person name="Tomb J.-F."/>
            <person name="Adams M.D."/>
            <person name="Reich C.I."/>
            <person name="Overbeek R."/>
            <person name="Kirkness E.F."/>
            <person name="Weinstock K.G."/>
            <person name="Merrick J.M."/>
            <person name="Glodek A."/>
            <person name="Scott J.L."/>
            <person name="Geoghagen N.S.M."/>
            <person name="Weidman J.F."/>
            <person name="Fuhrmann J.L."/>
            <person name="Nguyen D."/>
            <person name="Utterback T.R."/>
            <person name="Kelley J.M."/>
            <person name="Peterson J.D."/>
            <person name="Sadow P.W."/>
            <person name="Hanna M.C."/>
            <person name="Cotton M.D."/>
            <person name="Roberts K.M."/>
            <person name="Hurst M.A."/>
            <person name="Kaine B.P."/>
            <person name="Borodovsky M."/>
            <person name="Klenk H.-P."/>
            <person name="Fraser C.M."/>
            <person name="Smith H.O."/>
            <person name="Woese C.R."/>
            <person name="Venter J.C."/>
        </authorList>
    </citation>
    <scope>NUCLEOTIDE SEQUENCE [LARGE SCALE GENOMIC DNA]</scope>
    <source>
        <strain>ATCC 43067 / DSM 2661 / JAL-1 / JCM 10045 / NBRC 100440</strain>
    </source>
</reference>
<reference key="2">
    <citation type="journal article" date="2008" name="Nucleic Acids Res.">
        <title>Studies on Methanocaldococcus jannaschii RNase P reveal insights into the roles of RNA and protein cofactors in RNase P catalysis.</title>
        <authorList>
            <person name="Pulukkunat D.K."/>
            <person name="Gopalan V."/>
        </authorList>
    </citation>
    <scope>FUNCTION</scope>
    <scope>INTERACTION WITH RNP2</scope>
    <scope>SUBUNIT</scope>
    <source>
        <strain>ATCC 43067 / DSM 2661 / JAL-1 / JCM 10045 / NBRC 100440</strain>
    </source>
</reference>
<reference key="3">
    <citation type="journal article" date="2011" name="J. Mol. Biol.">
        <title>Cooperative RNP assembly: complementary rescue of structural defects by protein and RNA subunits of archaeal RNase P.</title>
        <authorList>
            <person name="Chen W.Y."/>
            <person name="Xu Y."/>
            <person name="Cho I.M."/>
            <person name="Oruganti S.V."/>
            <person name="Foster M.P."/>
            <person name="Gopalan V."/>
        </authorList>
    </citation>
    <scope>FUNCTION</scope>
    <scope>INTERACTION WITH RNP2</scope>
    <scope>SUBUNIT</scope>
    <source>
        <strain>ATCC 43067 / DSM 2661 / JAL-1 / JCM 10045 / NBRC 100440</strain>
    </source>
</reference>
<reference key="4">
    <citation type="journal article" date="2012" name="Nucleic Acids Res.">
        <title>Fidelity of tRNA 5'-maturation: a possible basis for the functional dependence of archaeal and eukaryal RNase P on multiple protein cofactors.</title>
        <authorList>
            <person name="Chen W.Y."/>
            <person name="Singh D."/>
            <person name="Lai L.B."/>
            <person name="Stiffler M.A."/>
            <person name="Lai H.D."/>
            <person name="Foster M.P."/>
            <person name="Gopalan V."/>
        </authorList>
    </citation>
    <scope>FUNCTION</scope>
    <scope>INTERACTION WITH RNP2</scope>
    <scope>SUBUNIT</scope>
</reference>
<protein>
    <recommendedName>
        <fullName evidence="1">Ribonuclease P protein component 3</fullName>
        <shortName evidence="1">RNase P component 3</shortName>
        <ecNumber evidence="1">3.1.26.5</ecNumber>
    </recommendedName>
    <alternativeName>
        <fullName evidence="1">Rpp30</fullName>
    </alternativeName>
</protein>
<name>RNP3_METJA</name>
<organism>
    <name type="scientific">Methanocaldococcus jannaschii (strain ATCC 43067 / DSM 2661 / JAL-1 / JCM 10045 / NBRC 100440)</name>
    <name type="common">Methanococcus jannaschii</name>
    <dbReference type="NCBI Taxonomy" id="243232"/>
    <lineage>
        <taxon>Archaea</taxon>
        <taxon>Methanobacteriati</taxon>
        <taxon>Methanobacteriota</taxon>
        <taxon>Methanomada group</taxon>
        <taxon>Methanococci</taxon>
        <taxon>Methanococcales</taxon>
        <taxon>Methanocaldococcaceae</taxon>
        <taxon>Methanocaldococcus</taxon>
    </lineage>
</organism>